<gene>
    <name type="primary">hup2</name>
    <name type="ordered locus">SCO5556</name>
    <name type="ORF">SC1C2.37</name>
</gene>
<protein>
    <recommendedName>
        <fullName>DNA-binding protein HU 2</fullName>
    </recommendedName>
</protein>
<accession>P0A3H7</accession>
<accession>O86537</accession>
<reference key="1">
    <citation type="journal article" date="2002" name="Nature">
        <title>Complete genome sequence of the model actinomycete Streptomyces coelicolor A3(2).</title>
        <authorList>
            <person name="Bentley S.D."/>
            <person name="Chater K.F."/>
            <person name="Cerdeno-Tarraga A.-M."/>
            <person name="Challis G.L."/>
            <person name="Thomson N.R."/>
            <person name="James K.D."/>
            <person name="Harris D.E."/>
            <person name="Quail M.A."/>
            <person name="Kieser H."/>
            <person name="Harper D."/>
            <person name="Bateman A."/>
            <person name="Brown S."/>
            <person name="Chandra G."/>
            <person name="Chen C.W."/>
            <person name="Collins M."/>
            <person name="Cronin A."/>
            <person name="Fraser A."/>
            <person name="Goble A."/>
            <person name="Hidalgo J."/>
            <person name="Hornsby T."/>
            <person name="Howarth S."/>
            <person name="Huang C.-H."/>
            <person name="Kieser T."/>
            <person name="Larke L."/>
            <person name="Murphy L.D."/>
            <person name="Oliver K."/>
            <person name="O'Neil S."/>
            <person name="Rabbinowitsch E."/>
            <person name="Rajandream M.A."/>
            <person name="Rutherford K.M."/>
            <person name="Rutter S."/>
            <person name="Seeger K."/>
            <person name="Saunders D."/>
            <person name="Sharp S."/>
            <person name="Squares R."/>
            <person name="Squares S."/>
            <person name="Taylor K."/>
            <person name="Warren T."/>
            <person name="Wietzorrek A."/>
            <person name="Woodward J.R."/>
            <person name="Barrell B.G."/>
            <person name="Parkhill J."/>
            <person name="Hopwood D.A."/>
        </authorList>
    </citation>
    <scope>NUCLEOTIDE SEQUENCE [LARGE SCALE GENOMIC DNA]</scope>
    <source>
        <strain>ATCC BAA-471 / A3(2) / M145</strain>
    </source>
</reference>
<reference key="2">
    <citation type="journal article" date="2013" name="J. Proteomics">
        <title>Proteomic survey of the Streptomyces coelicolor nucleoid.</title>
        <authorList>
            <person name="Bradshaw E."/>
            <person name="Saalbach G."/>
            <person name="McArthur M."/>
        </authorList>
    </citation>
    <scope>IDENTIFICATION BY MASS SPECTROMETRY</scope>
    <scope>SUBCELLULAR LOCATION</scope>
    <source>
        <strain>ATCC BAA-471 / A3(2) / M145</strain>
    </source>
</reference>
<name>DBH2_STRCO</name>
<sequence>MNKAQLVEAIADKLGGRQQAADAVDAVLDALVRAVVAGDRVSVTGFGSFEKVDRPARYARNPQTGERVRVKKTSVPRFRAGQGFKDLVSGSKKLPKNDIAVKKAPKGSLSGPPPTISKAAGKKAAAKKATGAAKKTTGAAKKTSAAAKKTTAKKTTGAAKTTAKKTTAKKSAAKTTTAAAKKTAAKKAPAKKATAKKAPAKKSTARKTTAKKATARKK</sequence>
<proteinExistence type="evidence at protein level"/>
<organism>
    <name type="scientific">Streptomyces coelicolor (strain ATCC BAA-471 / A3(2) / M145)</name>
    <dbReference type="NCBI Taxonomy" id="100226"/>
    <lineage>
        <taxon>Bacteria</taxon>
        <taxon>Bacillati</taxon>
        <taxon>Actinomycetota</taxon>
        <taxon>Actinomycetes</taxon>
        <taxon>Kitasatosporales</taxon>
        <taxon>Streptomycetaceae</taxon>
        <taxon>Streptomyces</taxon>
        <taxon>Streptomyces albidoflavus group</taxon>
    </lineage>
</organism>
<feature type="chain" id="PRO_0000104975" description="DNA-binding protein HU 2">
    <location>
        <begin position="1"/>
        <end position="218"/>
    </location>
</feature>
<feature type="region of interest" description="Bacterial histone-like domain">
    <location>
        <begin position="1"/>
        <end position="91"/>
    </location>
</feature>
<feature type="region of interest" description="Disordered" evidence="2">
    <location>
        <begin position="101"/>
        <end position="218"/>
    </location>
</feature>
<feature type="region of interest" description="Degenerate repeats region">
    <location>
        <begin position="118"/>
        <end position="218"/>
    </location>
</feature>
<feature type="compositionally biased region" description="Low complexity" evidence="2">
    <location>
        <begin position="127"/>
        <end position="161"/>
    </location>
</feature>
<feature type="compositionally biased region" description="Basic residues" evidence="2">
    <location>
        <begin position="162"/>
        <end position="172"/>
    </location>
</feature>
<feature type="compositionally biased region" description="Low complexity" evidence="2">
    <location>
        <begin position="173"/>
        <end position="182"/>
    </location>
</feature>
<feature type="compositionally biased region" description="Basic residues" evidence="2">
    <location>
        <begin position="183"/>
        <end position="218"/>
    </location>
</feature>
<comment type="function">
    <text evidence="1">Histone-like DNA-binding protein which is capable of wrapping DNA to stabilize it, and thus to prevent its denaturation under extreme environmental conditions.</text>
</comment>
<comment type="subunit">
    <text evidence="1">Homodimer.</text>
</comment>
<comment type="subcellular location">
    <subcellularLocation>
        <location evidence="4">Cytoplasm</location>
        <location evidence="4">Nucleoid</location>
    </subcellularLocation>
</comment>
<comment type="similarity">
    <text evidence="3">Belongs to the bacterial histone-like protein family. Long actinobacterial subfamily.</text>
</comment>
<evidence type="ECO:0000250" key="1"/>
<evidence type="ECO:0000256" key="2">
    <source>
        <dbReference type="SAM" id="MobiDB-lite"/>
    </source>
</evidence>
<evidence type="ECO:0000305" key="3"/>
<evidence type="ECO:0000305" key="4">
    <source>
    </source>
</evidence>
<keyword id="KW-0963">Cytoplasm</keyword>
<keyword id="KW-0226">DNA condensation</keyword>
<keyword id="KW-0238">DNA-binding</keyword>
<keyword id="KW-1185">Reference proteome</keyword>
<dbReference type="EMBL" id="AL939124">
    <property type="protein sequence ID" value="CAA20004.1"/>
    <property type="molecule type" value="Genomic_DNA"/>
</dbReference>
<dbReference type="PIR" id="T29086">
    <property type="entry name" value="T29086"/>
</dbReference>
<dbReference type="RefSeq" id="NP_629690.1">
    <property type="nucleotide sequence ID" value="NC_003888.3"/>
</dbReference>
<dbReference type="RefSeq" id="WP_003973439.1">
    <property type="nucleotide sequence ID" value="NZ_VNID01000011.1"/>
</dbReference>
<dbReference type="SMR" id="P0A3H7"/>
<dbReference type="STRING" id="100226.gene:17763213"/>
<dbReference type="PaxDb" id="100226-SCO5556"/>
<dbReference type="KEGG" id="sco:SCO5556"/>
<dbReference type="PATRIC" id="fig|100226.15.peg.5644"/>
<dbReference type="eggNOG" id="COG0776">
    <property type="taxonomic scope" value="Bacteria"/>
</dbReference>
<dbReference type="HOGENOM" id="CLU_085366_0_0_11"/>
<dbReference type="InParanoid" id="P0A3H7"/>
<dbReference type="OrthoDB" id="9799835at2"/>
<dbReference type="Proteomes" id="UP000001973">
    <property type="component" value="Chromosome"/>
</dbReference>
<dbReference type="GO" id="GO:0005829">
    <property type="term" value="C:cytosol"/>
    <property type="evidence" value="ECO:0000318"/>
    <property type="project" value="GO_Central"/>
</dbReference>
<dbReference type="GO" id="GO:0009295">
    <property type="term" value="C:nucleoid"/>
    <property type="evidence" value="ECO:0007669"/>
    <property type="project" value="UniProtKB-SubCell"/>
</dbReference>
<dbReference type="GO" id="GO:0003677">
    <property type="term" value="F:DNA binding"/>
    <property type="evidence" value="ECO:0000318"/>
    <property type="project" value="GO_Central"/>
</dbReference>
<dbReference type="GO" id="GO:0030527">
    <property type="term" value="F:structural constituent of chromatin"/>
    <property type="evidence" value="ECO:0007669"/>
    <property type="project" value="InterPro"/>
</dbReference>
<dbReference type="GO" id="GO:0030261">
    <property type="term" value="P:chromosome condensation"/>
    <property type="evidence" value="ECO:0007669"/>
    <property type="project" value="UniProtKB-KW"/>
</dbReference>
<dbReference type="CDD" id="cd13831">
    <property type="entry name" value="HU"/>
    <property type="match status" value="1"/>
</dbReference>
<dbReference type="FunFam" id="4.10.520.10:FF:000006">
    <property type="entry name" value="DNA-binding protein HU"/>
    <property type="match status" value="1"/>
</dbReference>
<dbReference type="Gene3D" id="4.10.520.10">
    <property type="entry name" value="IHF-like DNA-binding proteins"/>
    <property type="match status" value="1"/>
</dbReference>
<dbReference type="InterPro" id="IPR000119">
    <property type="entry name" value="Hist_DNA-bd"/>
</dbReference>
<dbReference type="InterPro" id="IPR020816">
    <property type="entry name" value="Histone-like_DNA-bd_CS"/>
</dbReference>
<dbReference type="InterPro" id="IPR010992">
    <property type="entry name" value="IHF-like_DNA-bd_dom_sf"/>
</dbReference>
<dbReference type="PANTHER" id="PTHR33175">
    <property type="entry name" value="DNA-BINDING PROTEIN HU"/>
    <property type="match status" value="1"/>
</dbReference>
<dbReference type="PANTHER" id="PTHR33175:SF3">
    <property type="entry name" value="DNA-BINDING PROTEIN HU-BETA"/>
    <property type="match status" value="1"/>
</dbReference>
<dbReference type="Pfam" id="PF00216">
    <property type="entry name" value="Bac_DNA_binding"/>
    <property type="match status" value="1"/>
</dbReference>
<dbReference type="PRINTS" id="PR01727">
    <property type="entry name" value="DNABINDINGHU"/>
</dbReference>
<dbReference type="SMART" id="SM00411">
    <property type="entry name" value="BHL"/>
    <property type="match status" value="1"/>
</dbReference>
<dbReference type="SUPFAM" id="SSF47729">
    <property type="entry name" value="IHF-like DNA-binding proteins"/>
    <property type="match status" value="1"/>
</dbReference>
<dbReference type="PROSITE" id="PS00045">
    <property type="entry name" value="HISTONE_LIKE"/>
    <property type="match status" value="1"/>
</dbReference>